<evidence type="ECO:0000255" key="1">
    <source>
        <dbReference type="HAMAP-Rule" id="MF_00373"/>
    </source>
</evidence>
<evidence type="ECO:0000305" key="2"/>
<dbReference type="EMBL" id="BA000016">
    <property type="protein sequence ID" value="BAB81440.1"/>
    <property type="molecule type" value="Genomic_DNA"/>
</dbReference>
<dbReference type="SMR" id="Q8XJM2"/>
<dbReference type="STRING" id="195102.gene:10490998"/>
<dbReference type="KEGG" id="cpe:CPE1734"/>
<dbReference type="HOGENOM" id="CLU_064548_7_0_9"/>
<dbReference type="Proteomes" id="UP000000818">
    <property type="component" value="Chromosome"/>
</dbReference>
<dbReference type="GO" id="GO:1990904">
    <property type="term" value="C:ribonucleoprotein complex"/>
    <property type="evidence" value="ECO:0007669"/>
    <property type="project" value="UniProtKB-KW"/>
</dbReference>
<dbReference type="GO" id="GO:0005840">
    <property type="term" value="C:ribosome"/>
    <property type="evidence" value="ECO:0007669"/>
    <property type="project" value="UniProtKB-KW"/>
</dbReference>
<dbReference type="GO" id="GO:0003735">
    <property type="term" value="F:structural constituent of ribosome"/>
    <property type="evidence" value="ECO:0007669"/>
    <property type="project" value="InterPro"/>
</dbReference>
<dbReference type="GO" id="GO:0006412">
    <property type="term" value="P:translation"/>
    <property type="evidence" value="ECO:0007669"/>
    <property type="project" value="UniProtKB-UniRule"/>
</dbReference>
<dbReference type="Gene3D" id="2.30.170.40">
    <property type="entry name" value="Ribosomal protein L28/L24"/>
    <property type="match status" value="1"/>
</dbReference>
<dbReference type="HAMAP" id="MF_00373">
    <property type="entry name" value="Ribosomal_bL28"/>
    <property type="match status" value="1"/>
</dbReference>
<dbReference type="InterPro" id="IPR050096">
    <property type="entry name" value="Bacterial_rp_bL28"/>
</dbReference>
<dbReference type="InterPro" id="IPR026569">
    <property type="entry name" value="Ribosomal_bL28"/>
</dbReference>
<dbReference type="InterPro" id="IPR034704">
    <property type="entry name" value="Ribosomal_bL28/bL31-like_sf"/>
</dbReference>
<dbReference type="InterPro" id="IPR001383">
    <property type="entry name" value="Ribosomal_bL28_bact-type"/>
</dbReference>
<dbReference type="InterPro" id="IPR037147">
    <property type="entry name" value="Ribosomal_bL28_sf"/>
</dbReference>
<dbReference type="NCBIfam" id="TIGR00009">
    <property type="entry name" value="L28"/>
    <property type="match status" value="1"/>
</dbReference>
<dbReference type="PANTHER" id="PTHR39080">
    <property type="entry name" value="50S RIBOSOMAL PROTEIN L28"/>
    <property type="match status" value="1"/>
</dbReference>
<dbReference type="PANTHER" id="PTHR39080:SF1">
    <property type="entry name" value="LARGE RIBOSOMAL SUBUNIT PROTEIN BL28A"/>
    <property type="match status" value="1"/>
</dbReference>
<dbReference type="Pfam" id="PF00830">
    <property type="entry name" value="Ribosomal_L28"/>
    <property type="match status" value="1"/>
</dbReference>
<dbReference type="SUPFAM" id="SSF143800">
    <property type="entry name" value="L28p-like"/>
    <property type="match status" value="1"/>
</dbReference>
<keyword id="KW-1185">Reference proteome</keyword>
<keyword id="KW-0687">Ribonucleoprotein</keyword>
<keyword id="KW-0689">Ribosomal protein</keyword>
<comment type="similarity">
    <text evidence="1">Belongs to the bacterial ribosomal protein bL28 family.</text>
</comment>
<accession>Q8XJM2</accession>
<name>RL28_CLOPE</name>
<sequence length="84" mass="9703">MARRCEICNKGVVAGVQYSHSHRQSKRTWAPNIKKVKAIVKGTPKTVHVCTRCLRSEKFKELYKKSLAKMQFNNCIFILHKNKG</sequence>
<gene>
    <name evidence="1" type="primary">rpmB</name>
    <name type="ordered locus">CPE1734</name>
</gene>
<protein>
    <recommendedName>
        <fullName evidence="1">Large ribosomal subunit protein bL28</fullName>
    </recommendedName>
    <alternativeName>
        <fullName evidence="2">50S ribosomal protein L28</fullName>
    </alternativeName>
</protein>
<feature type="chain" id="PRO_0000178460" description="Large ribosomal subunit protein bL28">
    <location>
        <begin position="1"/>
        <end position="84"/>
    </location>
</feature>
<reference key="1">
    <citation type="journal article" date="2002" name="Proc. Natl. Acad. Sci. U.S.A.">
        <title>Complete genome sequence of Clostridium perfringens, an anaerobic flesh-eater.</title>
        <authorList>
            <person name="Shimizu T."/>
            <person name="Ohtani K."/>
            <person name="Hirakawa H."/>
            <person name="Ohshima K."/>
            <person name="Yamashita A."/>
            <person name="Shiba T."/>
            <person name="Ogasawara N."/>
            <person name="Hattori M."/>
            <person name="Kuhara S."/>
            <person name="Hayashi H."/>
        </authorList>
    </citation>
    <scope>NUCLEOTIDE SEQUENCE [LARGE SCALE GENOMIC DNA]</scope>
    <source>
        <strain>13 / Type A</strain>
    </source>
</reference>
<proteinExistence type="inferred from homology"/>
<organism>
    <name type="scientific">Clostridium perfringens (strain 13 / Type A)</name>
    <dbReference type="NCBI Taxonomy" id="195102"/>
    <lineage>
        <taxon>Bacteria</taxon>
        <taxon>Bacillati</taxon>
        <taxon>Bacillota</taxon>
        <taxon>Clostridia</taxon>
        <taxon>Eubacteriales</taxon>
        <taxon>Clostridiaceae</taxon>
        <taxon>Clostridium</taxon>
    </lineage>
</organism>